<protein>
    <recommendedName>
        <fullName>Proton-coupled amino acid transporter 3</fullName>
        <shortName>Proton/amino acid transporter 3</shortName>
    </recommendedName>
    <alternativeName>
        <fullName>Solute carrier family 36 member 3</fullName>
    </alternativeName>
    <alternativeName>
        <fullName>Tramdorin-2</fullName>
    </alternativeName>
</protein>
<name>S36A3_HUMAN</name>
<evidence type="ECO:0000255" key="1"/>
<evidence type="ECO:0000256" key="2">
    <source>
        <dbReference type="SAM" id="MobiDB-lite"/>
    </source>
</evidence>
<evidence type="ECO:0000269" key="3">
    <source>
    </source>
</evidence>
<evidence type="ECO:0000269" key="4">
    <source>
    </source>
</evidence>
<evidence type="ECO:0000269" key="5">
    <source ref="3"/>
</evidence>
<evidence type="ECO:0000303" key="6">
    <source>
    </source>
</evidence>
<evidence type="ECO:0000303" key="7">
    <source>
    </source>
</evidence>
<evidence type="ECO:0000305" key="8"/>
<comment type="subcellular location">
    <subcellularLocation>
        <location evidence="8">Membrane</location>
        <topology evidence="8">Multi-pass membrane protein</topology>
    </subcellularLocation>
</comment>
<comment type="alternative products">
    <event type="alternative splicing"/>
    <isoform>
        <id>Q495N2-1</id>
        <name>1</name>
        <sequence type="displayed"/>
    </isoform>
    <isoform>
        <id>Q495N2-2</id>
        <name>2</name>
        <sequence type="described" ref="VSP_032601 VSP_032602"/>
    </isoform>
    <isoform>
        <id>Q495N2-3</id>
        <name>3</name>
        <sequence type="described" ref="VSP_032602"/>
    </isoform>
</comment>
<comment type="tissue specificity">
    <text evidence="4">Specifically expressed in testis.</text>
</comment>
<comment type="similarity">
    <text evidence="8">Belongs to the amino acid/polyamine transporter 2 family.</text>
</comment>
<reference key="1">
    <citation type="journal article" date="2003" name="Genomics">
        <title>A cluster of proton/amino acid transporter genes in the human and mouse genomes.</title>
        <authorList>
            <person name="Boll M."/>
            <person name="Foltz M."/>
            <person name="Rubio-Aliaga I."/>
            <person name="Daniel H."/>
        </authorList>
    </citation>
    <scope>NUCLEOTIDE SEQUENCE [LARGE SCALE MRNA] (ISOFORM 1)</scope>
    <source>
        <tissue>Testis</tissue>
    </source>
</reference>
<reference key="2">
    <citation type="journal article" date="2004" name="Nat. Genet.">
        <title>Complete sequencing and characterization of 21,243 full-length human cDNAs.</title>
        <authorList>
            <person name="Ota T."/>
            <person name="Suzuki Y."/>
            <person name="Nishikawa T."/>
            <person name="Otsuki T."/>
            <person name="Sugiyama T."/>
            <person name="Irie R."/>
            <person name="Wakamatsu A."/>
            <person name="Hayashi K."/>
            <person name="Sato H."/>
            <person name="Nagai K."/>
            <person name="Kimura K."/>
            <person name="Makita H."/>
            <person name="Sekine M."/>
            <person name="Obayashi M."/>
            <person name="Nishi T."/>
            <person name="Shibahara T."/>
            <person name="Tanaka T."/>
            <person name="Ishii S."/>
            <person name="Yamamoto J."/>
            <person name="Saito K."/>
            <person name="Kawai Y."/>
            <person name="Isono Y."/>
            <person name="Nakamura Y."/>
            <person name="Nagahari K."/>
            <person name="Murakami K."/>
            <person name="Yasuda T."/>
            <person name="Iwayanagi T."/>
            <person name="Wagatsuma M."/>
            <person name="Shiratori A."/>
            <person name="Sudo H."/>
            <person name="Hosoiri T."/>
            <person name="Kaku Y."/>
            <person name="Kodaira H."/>
            <person name="Kondo H."/>
            <person name="Sugawara M."/>
            <person name="Takahashi M."/>
            <person name="Kanda K."/>
            <person name="Yokoi T."/>
            <person name="Furuya T."/>
            <person name="Kikkawa E."/>
            <person name="Omura Y."/>
            <person name="Abe K."/>
            <person name="Kamihara K."/>
            <person name="Katsuta N."/>
            <person name="Sato K."/>
            <person name="Tanikawa M."/>
            <person name="Yamazaki M."/>
            <person name="Ninomiya K."/>
            <person name="Ishibashi T."/>
            <person name="Yamashita H."/>
            <person name="Murakawa K."/>
            <person name="Fujimori K."/>
            <person name="Tanai H."/>
            <person name="Kimata M."/>
            <person name="Watanabe M."/>
            <person name="Hiraoka S."/>
            <person name="Chiba Y."/>
            <person name="Ishida S."/>
            <person name="Ono Y."/>
            <person name="Takiguchi S."/>
            <person name="Watanabe S."/>
            <person name="Yosida M."/>
            <person name="Hotuta T."/>
            <person name="Kusano J."/>
            <person name="Kanehori K."/>
            <person name="Takahashi-Fujii A."/>
            <person name="Hara H."/>
            <person name="Tanase T.-O."/>
            <person name="Nomura Y."/>
            <person name="Togiya S."/>
            <person name="Komai F."/>
            <person name="Hara R."/>
            <person name="Takeuchi K."/>
            <person name="Arita M."/>
            <person name="Imose N."/>
            <person name="Musashino K."/>
            <person name="Yuuki H."/>
            <person name="Oshima A."/>
            <person name="Sasaki N."/>
            <person name="Aotsuka S."/>
            <person name="Yoshikawa Y."/>
            <person name="Matsunawa H."/>
            <person name="Ichihara T."/>
            <person name="Shiohata N."/>
            <person name="Sano S."/>
            <person name="Moriya S."/>
            <person name="Momiyama H."/>
            <person name="Satoh N."/>
            <person name="Takami S."/>
            <person name="Terashima Y."/>
            <person name="Suzuki O."/>
            <person name="Nakagawa S."/>
            <person name="Senoh A."/>
            <person name="Mizoguchi H."/>
            <person name="Goto Y."/>
            <person name="Shimizu F."/>
            <person name="Wakebe H."/>
            <person name="Hishigaki H."/>
            <person name="Watanabe T."/>
            <person name="Sugiyama A."/>
            <person name="Takemoto M."/>
            <person name="Kawakami B."/>
            <person name="Yamazaki M."/>
            <person name="Watanabe K."/>
            <person name="Kumagai A."/>
            <person name="Itakura S."/>
            <person name="Fukuzumi Y."/>
            <person name="Fujimori Y."/>
            <person name="Komiyama M."/>
            <person name="Tashiro H."/>
            <person name="Tanigami A."/>
            <person name="Fujiwara T."/>
            <person name="Ono T."/>
            <person name="Yamada K."/>
            <person name="Fujii Y."/>
            <person name="Ozaki K."/>
            <person name="Hirao M."/>
            <person name="Ohmori Y."/>
            <person name="Kawabata A."/>
            <person name="Hikiji T."/>
            <person name="Kobatake N."/>
            <person name="Inagaki H."/>
            <person name="Ikema Y."/>
            <person name="Okamoto S."/>
            <person name="Okitani R."/>
            <person name="Kawakami T."/>
            <person name="Noguchi S."/>
            <person name="Itoh T."/>
            <person name="Shigeta K."/>
            <person name="Senba T."/>
            <person name="Matsumura K."/>
            <person name="Nakajima Y."/>
            <person name="Mizuno T."/>
            <person name="Morinaga M."/>
            <person name="Sasaki M."/>
            <person name="Togashi T."/>
            <person name="Oyama M."/>
            <person name="Hata H."/>
            <person name="Watanabe M."/>
            <person name="Komatsu T."/>
            <person name="Mizushima-Sugano J."/>
            <person name="Satoh T."/>
            <person name="Shirai Y."/>
            <person name="Takahashi Y."/>
            <person name="Nakagawa K."/>
            <person name="Okumura K."/>
            <person name="Nagase T."/>
            <person name="Nomura N."/>
            <person name="Kikuchi H."/>
            <person name="Masuho Y."/>
            <person name="Yamashita R."/>
            <person name="Nakai K."/>
            <person name="Yada T."/>
            <person name="Nakamura Y."/>
            <person name="Ohara O."/>
            <person name="Isogai T."/>
            <person name="Sugano S."/>
        </authorList>
    </citation>
    <scope>NUCLEOTIDE SEQUENCE [LARGE SCALE MRNA] (ISOFORMS 1 AND 2)</scope>
    <scope>VARIANT GLU-167</scope>
    <source>
        <tissue>Testis</tissue>
    </source>
</reference>
<reference key="3">
    <citation type="submission" date="2005-09" db="EMBL/GenBank/DDBJ databases">
        <authorList>
            <person name="Mural R.J."/>
            <person name="Istrail S."/>
            <person name="Sutton G.G."/>
            <person name="Florea L."/>
            <person name="Halpern A.L."/>
            <person name="Mobarry C.M."/>
            <person name="Lippert R."/>
            <person name="Walenz B."/>
            <person name="Shatkay H."/>
            <person name="Dew I."/>
            <person name="Miller J.R."/>
            <person name="Flanigan M.J."/>
            <person name="Edwards N.J."/>
            <person name="Bolanos R."/>
            <person name="Fasulo D."/>
            <person name="Halldorsson B.V."/>
            <person name="Hannenhalli S."/>
            <person name="Turner R."/>
            <person name="Yooseph S."/>
            <person name="Lu F."/>
            <person name="Nusskern D.R."/>
            <person name="Shue B.C."/>
            <person name="Zheng X.H."/>
            <person name="Zhong F."/>
            <person name="Delcher A.L."/>
            <person name="Huson D.H."/>
            <person name="Kravitz S.A."/>
            <person name="Mouchard L."/>
            <person name="Reinert K."/>
            <person name="Remington K.A."/>
            <person name="Clark A.G."/>
            <person name="Waterman M.S."/>
            <person name="Eichler E.E."/>
            <person name="Adams M.D."/>
            <person name="Hunkapiller M.W."/>
            <person name="Myers E.W."/>
            <person name="Venter J.C."/>
        </authorList>
    </citation>
    <scope>NUCLEOTIDE SEQUENCE [LARGE SCALE GENOMIC DNA]</scope>
    <scope>VARIANT GLU-167</scope>
</reference>
<reference key="4">
    <citation type="journal article" date="2004" name="Genome Res.">
        <title>The status, quality, and expansion of the NIH full-length cDNA project: the Mammalian Gene Collection (MGC).</title>
        <authorList>
            <consortium name="The MGC Project Team"/>
        </authorList>
    </citation>
    <scope>NUCLEOTIDE SEQUENCE [LARGE SCALE MRNA] (ISOFORMS 1 AND 3)</scope>
</reference>
<reference key="5">
    <citation type="journal article" date="2004" name="Mamm. Genome">
        <title>Organization and expression of the SLC36 cluster of amino acid transporter genes.</title>
        <authorList>
            <person name="Bermingham J.R. Jr."/>
            <person name="Pennington J."/>
        </authorList>
    </citation>
    <scope>TISSUE SPECIFICITY</scope>
</reference>
<proteinExistence type="evidence at transcript level"/>
<dbReference type="EMBL" id="AY162215">
    <property type="protein sequence ID" value="AAO11789.1"/>
    <property type="molecule type" value="mRNA"/>
</dbReference>
<dbReference type="EMBL" id="AK127978">
    <property type="protein sequence ID" value="BAC87215.1"/>
    <property type="molecule type" value="mRNA"/>
</dbReference>
<dbReference type="EMBL" id="AK131483">
    <property type="protein sequence ID" value="BAD18628.1"/>
    <property type="molecule type" value="mRNA"/>
</dbReference>
<dbReference type="EMBL" id="CH471062">
    <property type="protein sequence ID" value="EAW61679.1"/>
    <property type="molecule type" value="Genomic_DNA"/>
</dbReference>
<dbReference type="EMBL" id="BC101092">
    <property type="protein sequence ID" value="AAI01093.1"/>
    <property type="molecule type" value="mRNA"/>
</dbReference>
<dbReference type="EMBL" id="BC101093">
    <property type="protein sequence ID" value="AAI01094.1"/>
    <property type="molecule type" value="mRNA"/>
</dbReference>
<dbReference type="EMBL" id="BC101094">
    <property type="protein sequence ID" value="AAI01095.1"/>
    <property type="molecule type" value="mRNA"/>
</dbReference>
<dbReference type="EMBL" id="BC101095">
    <property type="protein sequence ID" value="AAI01096.1"/>
    <property type="molecule type" value="mRNA"/>
</dbReference>
<dbReference type="CCDS" id="CCDS4314.1">
    <molecule id="Q495N2-1"/>
</dbReference>
<dbReference type="CCDS" id="CCDS47316.1">
    <molecule id="Q495N2-3"/>
</dbReference>
<dbReference type="RefSeq" id="NP_001138489.1">
    <molecule id="Q495N2-3"/>
    <property type="nucleotide sequence ID" value="NM_001145017.2"/>
</dbReference>
<dbReference type="RefSeq" id="NP_861439.3">
    <molecule id="Q495N2-1"/>
    <property type="nucleotide sequence ID" value="NM_181774.3"/>
</dbReference>
<dbReference type="BioGRID" id="130167">
    <property type="interactions" value="33"/>
</dbReference>
<dbReference type="FunCoup" id="Q495N2">
    <property type="interactions" value="399"/>
</dbReference>
<dbReference type="IntAct" id="Q495N2">
    <property type="interactions" value="1"/>
</dbReference>
<dbReference type="STRING" id="9606.ENSP00000366942"/>
<dbReference type="TCDB" id="2.A.18.8.4">
    <property type="family name" value="the amino acid/auxin permease (aaap) family"/>
</dbReference>
<dbReference type="iPTMnet" id="Q495N2"/>
<dbReference type="PhosphoSitePlus" id="Q495N2"/>
<dbReference type="BioMuta" id="SLC36A3"/>
<dbReference type="DMDM" id="172046109"/>
<dbReference type="MassIVE" id="Q495N2"/>
<dbReference type="PaxDb" id="9606-ENSP00000366942"/>
<dbReference type="PeptideAtlas" id="Q495N2"/>
<dbReference type="ProteomicsDB" id="61968">
    <molecule id="Q495N2-2"/>
</dbReference>
<dbReference type="ProteomicsDB" id="61969">
    <molecule id="Q495N2-3"/>
</dbReference>
<dbReference type="Antibodypedia" id="28190">
    <property type="antibodies" value="46 antibodies from 13 providers"/>
</dbReference>
<dbReference type="DNASU" id="285641"/>
<dbReference type="Ensembl" id="ENST00000335230.8">
    <molecule id="Q495N2-1"/>
    <property type="protein sequence ID" value="ENSP00000334750.3"/>
    <property type="gene ID" value="ENSG00000186334.10"/>
</dbReference>
<dbReference type="Ensembl" id="ENST00000377713.3">
    <molecule id="Q495N2-3"/>
    <property type="protein sequence ID" value="ENSP00000366942.3"/>
    <property type="gene ID" value="ENSG00000186334.10"/>
</dbReference>
<dbReference type="GeneID" id="285641"/>
<dbReference type="KEGG" id="hsa:285641"/>
<dbReference type="MANE-Select" id="ENST00000335230.8">
    <property type="protein sequence ID" value="ENSP00000334750.3"/>
    <property type="RefSeq nucleotide sequence ID" value="NM_181774.4"/>
    <property type="RefSeq protein sequence ID" value="NP_861439.3"/>
</dbReference>
<dbReference type="UCSC" id="uc003ltw.3">
    <molecule id="Q495N2-1"/>
    <property type="organism name" value="human"/>
</dbReference>
<dbReference type="AGR" id="HGNC:19659"/>
<dbReference type="CTD" id="285641"/>
<dbReference type="GeneCards" id="SLC36A3"/>
<dbReference type="HGNC" id="HGNC:19659">
    <property type="gene designation" value="SLC36A3"/>
</dbReference>
<dbReference type="HPA" id="ENSG00000186334">
    <property type="expression patterns" value="Tissue enriched (testis)"/>
</dbReference>
<dbReference type="MIM" id="608332">
    <property type="type" value="gene"/>
</dbReference>
<dbReference type="neXtProt" id="NX_Q495N2"/>
<dbReference type="PharmGKB" id="PA134875494"/>
<dbReference type="VEuPathDB" id="HostDB:ENSG00000186334"/>
<dbReference type="eggNOG" id="KOG1304">
    <property type="taxonomic scope" value="Eukaryota"/>
</dbReference>
<dbReference type="GeneTree" id="ENSGT00940000162406"/>
<dbReference type="HOGENOM" id="CLU_009646_0_2_1"/>
<dbReference type="InParanoid" id="Q495N2"/>
<dbReference type="OMA" id="NERSAMW"/>
<dbReference type="OrthoDB" id="1684102at2759"/>
<dbReference type="PAN-GO" id="Q495N2">
    <property type="GO annotations" value="8 GO annotations based on evolutionary models"/>
</dbReference>
<dbReference type="PhylomeDB" id="Q495N2"/>
<dbReference type="TreeFam" id="TF314873"/>
<dbReference type="PathwayCommons" id="Q495N2"/>
<dbReference type="SignaLink" id="Q495N2"/>
<dbReference type="BioGRID-ORCS" id="285641">
    <property type="hits" value="5 hits in 1136 CRISPR screens"/>
</dbReference>
<dbReference type="GenomeRNAi" id="285641"/>
<dbReference type="Pharos" id="Q495N2">
    <property type="development level" value="Tdark"/>
</dbReference>
<dbReference type="PRO" id="PR:Q495N2"/>
<dbReference type="Proteomes" id="UP000005640">
    <property type="component" value="Chromosome 5"/>
</dbReference>
<dbReference type="RNAct" id="Q495N2">
    <property type="molecule type" value="protein"/>
</dbReference>
<dbReference type="Bgee" id="ENSG00000186334">
    <property type="expression patterns" value="Expressed in male germ line stem cell (sensu Vertebrata) in testis and 9 other cell types or tissues"/>
</dbReference>
<dbReference type="GO" id="GO:0005774">
    <property type="term" value="C:vacuolar membrane"/>
    <property type="evidence" value="ECO:0000318"/>
    <property type="project" value="GO_Central"/>
</dbReference>
<dbReference type="GO" id="GO:0005280">
    <property type="term" value="F:amino acid:proton symporter activity"/>
    <property type="evidence" value="ECO:0000318"/>
    <property type="project" value="GO_Central"/>
</dbReference>
<dbReference type="GO" id="GO:0015187">
    <property type="term" value="F:glycine transmembrane transporter activity"/>
    <property type="evidence" value="ECO:0000318"/>
    <property type="project" value="GO_Central"/>
</dbReference>
<dbReference type="GO" id="GO:0015180">
    <property type="term" value="F:L-alanine transmembrane transporter activity"/>
    <property type="evidence" value="ECO:0000318"/>
    <property type="project" value="GO_Central"/>
</dbReference>
<dbReference type="GO" id="GO:0015193">
    <property type="term" value="F:L-proline transmembrane transporter activity"/>
    <property type="evidence" value="ECO:0000318"/>
    <property type="project" value="GO_Central"/>
</dbReference>
<dbReference type="GO" id="GO:0015816">
    <property type="term" value="P:glycine transport"/>
    <property type="evidence" value="ECO:0000318"/>
    <property type="project" value="GO_Central"/>
</dbReference>
<dbReference type="GO" id="GO:0015808">
    <property type="term" value="P:L-alanine transport"/>
    <property type="evidence" value="ECO:0000318"/>
    <property type="project" value="GO_Central"/>
</dbReference>
<dbReference type="GO" id="GO:0035524">
    <property type="term" value="P:proline transmembrane transport"/>
    <property type="evidence" value="ECO:0000318"/>
    <property type="project" value="GO_Central"/>
</dbReference>
<dbReference type="GO" id="GO:1902600">
    <property type="term" value="P:proton transmembrane transport"/>
    <property type="evidence" value="ECO:0000318"/>
    <property type="project" value="GO_Central"/>
</dbReference>
<dbReference type="InterPro" id="IPR013057">
    <property type="entry name" value="AA_transpt_TM"/>
</dbReference>
<dbReference type="PANTHER" id="PTHR22950">
    <property type="entry name" value="AMINO ACID TRANSPORTER"/>
    <property type="match status" value="1"/>
</dbReference>
<dbReference type="PANTHER" id="PTHR22950:SF258">
    <property type="entry name" value="PROTON-COUPLED AMINO ACID TRANSPORTER 3"/>
    <property type="match status" value="1"/>
</dbReference>
<dbReference type="Pfam" id="PF01490">
    <property type="entry name" value="Aa_trans"/>
    <property type="match status" value="1"/>
</dbReference>
<gene>
    <name type="primary">SLC36A3</name>
    <name type="synonym">PAT3</name>
    <name type="synonym">TRAMD2</name>
</gene>
<accession>Q495N2</accession>
<accession>Q495N3</accession>
<accession>Q6ZMU7</accession>
<accession>Q6ZRU4</accession>
<accession>Q7Z6B4</accession>
<sequence length="470" mass="51735">MSLLGRDYNSELNSLDNGPQSPSESSSSITSENVHPAGEAGLSMMQTLIHLLKCNIGTGLLGLPLAIKNAGLLVGPVSLLAIGVLTVHCMVILLNCAQHLSQRLQKTFVNYGEATMYGLETCPNTWLRAHAVWGRYTVSFLLVITQLGFCSVYFMFMADNLQQMVEKAHVTSNICQPREILTLTPILDIRFYMLIILPFLILLVFIQNLKVLSVFSTLANITTLGSMALIFEYIMEGIPYPSNLPLMANWKTFLLFFGTAIFTFEGVGMVLPLKNQMKHPQQFSFVLYLGMSIVIILYILLGTLGYMKFGSDTQASITLNLPNCWLYQSVKLMYSIGIFFTYALQFHVPAEIIIPFAISQVSESWALFVDLSVRSALVCLTCVSAILIPRLDLVISLVGSVSSSALALIIPALLEIVIFYSEDMSCVTIAKDIMISIVGLLGCIFGTYQALYELPQPISHSMANSTGVHA</sequence>
<organism>
    <name type="scientific">Homo sapiens</name>
    <name type="common">Human</name>
    <dbReference type="NCBI Taxonomy" id="9606"/>
    <lineage>
        <taxon>Eukaryota</taxon>
        <taxon>Metazoa</taxon>
        <taxon>Chordata</taxon>
        <taxon>Craniata</taxon>
        <taxon>Vertebrata</taxon>
        <taxon>Euteleostomi</taxon>
        <taxon>Mammalia</taxon>
        <taxon>Eutheria</taxon>
        <taxon>Euarchontoglires</taxon>
        <taxon>Primates</taxon>
        <taxon>Haplorrhini</taxon>
        <taxon>Catarrhini</taxon>
        <taxon>Hominidae</taxon>
        <taxon>Homo</taxon>
    </lineage>
</organism>
<feature type="chain" id="PRO_0000326204" description="Proton-coupled amino acid transporter 3">
    <location>
        <begin position="1"/>
        <end position="470"/>
    </location>
</feature>
<feature type="topological domain" description="Cytoplasmic" evidence="1">
    <location>
        <begin position="1"/>
        <end position="46"/>
    </location>
</feature>
<feature type="transmembrane region" description="Helical" evidence="1">
    <location>
        <begin position="47"/>
        <end position="67"/>
    </location>
</feature>
<feature type="topological domain" description="Extracellular" evidence="1">
    <location>
        <begin position="68"/>
        <end position="71"/>
    </location>
</feature>
<feature type="transmembrane region" description="Helical" evidence="1">
    <location>
        <begin position="72"/>
        <end position="92"/>
    </location>
</feature>
<feature type="topological domain" description="Cytoplasmic" evidence="1">
    <location>
        <begin position="93"/>
        <end position="137"/>
    </location>
</feature>
<feature type="transmembrane region" description="Helical" evidence="1">
    <location>
        <begin position="138"/>
        <end position="158"/>
    </location>
</feature>
<feature type="topological domain" description="Extracellular" evidence="1">
    <location>
        <begin position="159"/>
        <end position="185"/>
    </location>
</feature>
<feature type="transmembrane region" description="Helical" evidence="1">
    <location>
        <begin position="186"/>
        <end position="206"/>
    </location>
</feature>
<feature type="topological domain" description="Cytoplasmic" evidence="1">
    <location>
        <begin position="207"/>
        <end position="210"/>
    </location>
</feature>
<feature type="transmembrane region" description="Helical" evidence="1">
    <location>
        <begin position="211"/>
        <end position="231"/>
    </location>
</feature>
<feature type="topological domain" description="Extracellular" evidence="1">
    <location>
        <begin position="232"/>
        <end position="252"/>
    </location>
</feature>
<feature type="transmembrane region" description="Helical" evidence="1">
    <location>
        <begin position="253"/>
        <end position="273"/>
    </location>
</feature>
<feature type="topological domain" description="Cytoplasmic" evidence="1">
    <location>
        <begin position="274"/>
        <end position="284"/>
    </location>
</feature>
<feature type="transmembrane region" description="Helical" evidence="1">
    <location>
        <begin position="285"/>
        <end position="305"/>
    </location>
</feature>
<feature type="topological domain" description="Extracellular" evidence="1">
    <location>
        <begin position="306"/>
        <end position="337"/>
    </location>
</feature>
<feature type="transmembrane region" description="Helical" evidence="1">
    <location>
        <begin position="338"/>
        <end position="358"/>
    </location>
</feature>
<feature type="topological domain" description="Cytoplasmic" evidence="1">
    <location>
        <begin position="359"/>
        <end position="367"/>
    </location>
</feature>
<feature type="transmembrane region" description="Helical" evidence="1">
    <location>
        <begin position="368"/>
        <end position="388"/>
    </location>
</feature>
<feature type="topological domain" description="Extracellular" evidence="1">
    <location>
        <begin position="389"/>
        <end position="392"/>
    </location>
</feature>
<feature type="transmembrane region" description="Helical" evidence="1">
    <location>
        <begin position="393"/>
        <end position="413"/>
    </location>
</feature>
<feature type="topological domain" description="Cytoplasmic" evidence="1">
    <location>
        <begin position="414"/>
        <end position="425"/>
    </location>
</feature>
<feature type="transmembrane region" description="Helical" evidence="1">
    <location>
        <begin position="426"/>
        <end position="446"/>
    </location>
</feature>
<feature type="topological domain" description="Extracellular" evidence="1">
    <location>
        <begin position="447"/>
        <end position="470"/>
    </location>
</feature>
<feature type="region of interest" description="Disordered" evidence="2">
    <location>
        <begin position="10"/>
        <end position="33"/>
    </location>
</feature>
<feature type="compositionally biased region" description="Polar residues" evidence="2">
    <location>
        <begin position="10"/>
        <end position="20"/>
    </location>
</feature>
<feature type="compositionally biased region" description="Low complexity" evidence="2">
    <location>
        <begin position="21"/>
        <end position="31"/>
    </location>
</feature>
<feature type="splice variant" id="VSP_032601" description="In isoform 2." evidence="6">
    <original>MSLLGRDYNSELNSLDNGPQSPSESSSSITSENVHPAGEAGLSMMQTLIHLLKCNIGTGLLGLPLAIKNAGLL</original>
    <variation>MGVIISGSLPPFSSPLQ</variation>
    <location>
        <begin position="1"/>
        <end position="73"/>
    </location>
</feature>
<feature type="splice variant" id="VSP_032602" description="In isoform 2 and isoform 3." evidence="6 7">
    <original>R</original>
    <variation>RWNLALSPRLECSGKISAHCNPHLQGSSNSPAQASRVAGIYR</variation>
    <location>
        <position position="135"/>
    </location>
</feature>
<feature type="sequence variant" id="VAR_040006" description="In dbSNP:rs978012." evidence="3 5">
    <original>K</original>
    <variation>E</variation>
    <location>
        <position position="167"/>
    </location>
</feature>
<feature type="sequence variant" id="VAR_040007" description="In dbSNP:rs12520516.">
    <original>P</original>
    <variation>S</variation>
    <location>
        <position position="185"/>
    </location>
</feature>
<feature type="sequence variant" id="VAR_040008" description="In dbSNP:rs17660042.">
    <original>R</original>
    <variation>H</variation>
    <location>
        <position position="190"/>
    </location>
</feature>
<feature type="sequence variant" id="VAR_040009" description="In dbSNP:rs13155282.">
    <original>E</original>
    <variation>D</variation>
    <location>
        <position position="415"/>
    </location>
</feature>
<feature type="sequence variant" id="VAR_040010" description="In dbSNP:rs13155520.">
    <original>S</original>
    <variation>F</variation>
    <location>
        <position position="421"/>
    </location>
</feature>
<feature type="sequence conflict" description="In Ref. 4; AAI01095." evidence="8" ref="4">
    <original>Q</original>
    <variation>R</variation>
    <location>
        <position position="314"/>
    </location>
</feature>
<keyword id="KW-0025">Alternative splicing</keyword>
<keyword id="KW-0472">Membrane</keyword>
<keyword id="KW-1185">Reference proteome</keyword>
<keyword id="KW-0812">Transmembrane</keyword>
<keyword id="KW-1133">Transmembrane helix</keyword>